<evidence type="ECO:0000250" key="1">
    <source>
        <dbReference type="UniProtKB" id="P02768"/>
    </source>
</evidence>
<evidence type="ECO:0000250" key="2">
    <source>
        <dbReference type="UniProtKB" id="P02769"/>
    </source>
</evidence>
<evidence type="ECO:0000250" key="3">
    <source>
        <dbReference type="UniProtKB" id="P02770"/>
    </source>
</evidence>
<evidence type="ECO:0000250" key="4">
    <source>
        <dbReference type="UniProtKB" id="P07724"/>
    </source>
</evidence>
<evidence type="ECO:0000255" key="5">
    <source>
        <dbReference type="PROSITE-ProRule" id="PRU00769"/>
    </source>
</evidence>
<evidence type="ECO:0000305" key="6"/>
<protein>
    <recommendedName>
        <fullName>Albumin</fullName>
    </recommendedName>
</protein>
<proteinExistence type="evidence at protein level"/>
<dbReference type="EMBL" id="AY754333">
    <property type="protein sequence ID" value="AAV28861.1"/>
    <property type="molecule type" value="mRNA"/>
</dbReference>
<dbReference type="RefSeq" id="NP_001310707.1">
    <property type="nucleotide sequence ID" value="NM_001323778.1"/>
</dbReference>
<dbReference type="SMR" id="Q5XLE4"/>
<dbReference type="Allergome" id="1494">
    <property type="allergen name" value="Equ as 3"/>
</dbReference>
<dbReference type="GeneID" id="106835108"/>
<dbReference type="KEGG" id="eai:106835108"/>
<dbReference type="CTD" id="213"/>
<dbReference type="OrthoDB" id="3737at314145"/>
<dbReference type="Proteomes" id="UP000694387">
    <property type="component" value="Unplaced"/>
</dbReference>
<dbReference type="GO" id="GO:0072562">
    <property type="term" value="C:blood microparticle"/>
    <property type="evidence" value="ECO:0007669"/>
    <property type="project" value="TreeGrafter"/>
</dbReference>
<dbReference type="GO" id="GO:0005737">
    <property type="term" value="C:cytoplasm"/>
    <property type="evidence" value="ECO:0007669"/>
    <property type="project" value="TreeGrafter"/>
</dbReference>
<dbReference type="GO" id="GO:0032991">
    <property type="term" value="C:protein-containing complex"/>
    <property type="evidence" value="ECO:0000250"/>
    <property type="project" value="UniProtKB"/>
</dbReference>
<dbReference type="GO" id="GO:0003677">
    <property type="term" value="F:DNA binding"/>
    <property type="evidence" value="ECO:0000250"/>
    <property type="project" value="UniProtKB"/>
</dbReference>
<dbReference type="GO" id="GO:1903981">
    <property type="term" value="F:enterobactin binding"/>
    <property type="evidence" value="ECO:0000250"/>
    <property type="project" value="UniProtKB"/>
</dbReference>
<dbReference type="GO" id="GO:0005504">
    <property type="term" value="F:fatty acid binding"/>
    <property type="evidence" value="ECO:0000250"/>
    <property type="project" value="UniProtKB"/>
</dbReference>
<dbReference type="GO" id="GO:0046872">
    <property type="term" value="F:metal ion binding"/>
    <property type="evidence" value="ECO:0007669"/>
    <property type="project" value="UniProtKB-KW"/>
</dbReference>
<dbReference type="GO" id="GO:0030170">
    <property type="term" value="F:pyridoxal phosphate binding"/>
    <property type="evidence" value="ECO:0000250"/>
    <property type="project" value="UniProtKB"/>
</dbReference>
<dbReference type="GO" id="GO:0015643">
    <property type="term" value="F:toxic substance binding"/>
    <property type="evidence" value="ECO:0000250"/>
    <property type="project" value="UniProtKB"/>
</dbReference>
<dbReference type="GO" id="GO:0072732">
    <property type="term" value="P:cellular response to calcium ion starvation"/>
    <property type="evidence" value="ECO:0000250"/>
    <property type="project" value="UniProtKB"/>
</dbReference>
<dbReference type="GO" id="GO:0009267">
    <property type="term" value="P:cellular response to starvation"/>
    <property type="evidence" value="ECO:0000250"/>
    <property type="project" value="UniProtKB"/>
</dbReference>
<dbReference type="GO" id="GO:0051902">
    <property type="term" value="P:negative regulation of mitochondrial depolarization"/>
    <property type="evidence" value="ECO:0000250"/>
    <property type="project" value="UniProtKB"/>
</dbReference>
<dbReference type="CDD" id="cd00015">
    <property type="entry name" value="ALBUMIN"/>
    <property type="match status" value="3"/>
</dbReference>
<dbReference type="FunFam" id="1.10.246.10:FF:000001">
    <property type="entry name" value="Serum albumin"/>
    <property type="match status" value="2"/>
</dbReference>
<dbReference type="FunFam" id="1.10.246.10:FF:000002">
    <property type="entry name" value="Serum albumin"/>
    <property type="match status" value="2"/>
</dbReference>
<dbReference type="FunFam" id="1.10.246.10:FF:000003">
    <property type="entry name" value="Serum albumin"/>
    <property type="match status" value="1"/>
</dbReference>
<dbReference type="Gene3D" id="1.10.246.10">
    <property type="match status" value="6"/>
</dbReference>
<dbReference type="InterPro" id="IPR000264">
    <property type="entry name" value="ALB/AFP/VDB"/>
</dbReference>
<dbReference type="InterPro" id="IPR020858">
    <property type="entry name" value="Serum_albumin-like"/>
</dbReference>
<dbReference type="InterPro" id="IPR021177">
    <property type="entry name" value="Serum_albumin/AFP/Afamin"/>
</dbReference>
<dbReference type="InterPro" id="IPR020857">
    <property type="entry name" value="Serum_albumin_CS"/>
</dbReference>
<dbReference type="InterPro" id="IPR014760">
    <property type="entry name" value="Serum_albumin_N"/>
</dbReference>
<dbReference type="PANTHER" id="PTHR11385:SF15">
    <property type="entry name" value="ALBUMIN"/>
    <property type="match status" value="1"/>
</dbReference>
<dbReference type="PANTHER" id="PTHR11385">
    <property type="entry name" value="SERUM ALBUMIN-RELATED"/>
    <property type="match status" value="1"/>
</dbReference>
<dbReference type="Pfam" id="PF00273">
    <property type="entry name" value="Serum_albumin"/>
    <property type="match status" value="3"/>
</dbReference>
<dbReference type="PIRSF" id="PIRSF002520">
    <property type="entry name" value="Serum_albumin_subgroup"/>
    <property type="match status" value="1"/>
</dbReference>
<dbReference type="PRINTS" id="PR00802">
    <property type="entry name" value="SERUMALBUMIN"/>
</dbReference>
<dbReference type="SMART" id="SM00103">
    <property type="entry name" value="ALBUMIN"/>
    <property type="match status" value="3"/>
</dbReference>
<dbReference type="SUPFAM" id="SSF48552">
    <property type="entry name" value="Serum albumin-like"/>
    <property type="match status" value="3"/>
</dbReference>
<dbReference type="PROSITE" id="PS00212">
    <property type="entry name" value="ALBUMIN_1"/>
    <property type="match status" value="3"/>
</dbReference>
<dbReference type="PROSITE" id="PS51438">
    <property type="entry name" value="ALBUMIN_2"/>
    <property type="match status" value="3"/>
</dbReference>
<accession>Q5XLE4</accession>
<name>ALBU_EQUAS</name>
<keyword id="KW-0106">Calcium</keyword>
<keyword id="KW-0165">Cleavage on pair of basic residues</keyword>
<keyword id="KW-0186">Copper</keyword>
<keyword id="KW-0903">Direct protein sequencing</keyword>
<keyword id="KW-1015">Disulfide bond</keyword>
<keyword id="KW-0446">Lipid-binding</keyword>
<keyword id="KW-0479">Metal-binding</keyword>
<keyword id="KW-0488">Methylation</keyword>
<keyword id="KW-0597">Phosphoprotein</keyword>
<keyword id="KW-1185">Reference proteome</keyword>
<keyword id="KW-0677">Repeat</keyword>
<keyword id="KW-0964">Secreted</keyword>
<keyword id="KW-0732">Signal</keyword>
<keyword id="KW-0862">Zinc</keyword>
<sequence length="607" mass="68539">MKWVTFVSLLFLFSSAYFRGVLRRDTHKSEIAHRFNDLGEKHFKGLVLVAFSQYLQQCPFEDHVKLVNEVTEFAKKCAADESAENCDKSLHTLFGDKLCTVATLRATYGELADCCEKQEPERNECFLTHKDDHPNLPKLKPEPDAQCAAFQEDPDKFLGKYLYEVARRHPYFYGPELLFHAEEYKADFTECCPADDKAGCLIPKLDALKERILLSSAKERLKCSSFQKFGERAFKAWSVARLSQKFPKADFAEVSKIVTDLTKVHKECCHGDLLECADDRADLTKYICEHQDSISGKLKACCDKPLLQKSHCIAEVKEDDLPSDLPALAADFAEDKEICKHYKDAKDVFLGTFLYEYSRRHPDYSVSLLLRIAKTYEATLEKCCAEADPPACYATVFDQFTPLVEEPKSLVKKNCDLFEEVGEYDFQNALIVRYTKKAPQVSTPTLVEIGRTLGKVGSRCCKLPESERLPCSENHLALALNRLCVLHEKTPVSEKITKCCTDSLAERRPCFSALELDEGYIPKEFKAETFTFHADICTLPEDEKQIKKQSALAELVKHKPKATKEQLKTVLGNFSAFVAKCCGAEDKEACFAEEGPKLVASSQLALA</sequence>
<reference key="1">
    <citation type="submission" date="2004-09" db="EMBL/GenBank/DDBJ databases">
        <title>Full-length cDNA sequence of serum albumin of donkey (Equus asinus) and its structure analysis.</title>
        <authorList>
            <person name="Li H."/>
            <person name="Tang Y."/>
            <person name="Pingfan R."/>
        </authorList>
    </citation>
    <scope>NUCLEOTIDE SEQUENCE [MRNA]</scope>
    <source>
        <tissue>Liver</tissue>
    </source>
</reference>
<reference key="2">
    <citation type="journal article" date="2007" name="J. Mass Spectrom.">
        <title>Characterization of the protein profile of donkey's milk whey fraction.</title>
        <authorList>
            <person name="Cunsolo V."/>
            <person name="Saletti R."/>
            <person name="Muccilli V."/>
            <person name="Foti S."/>
        </authorList>
    </citation>
    <scope>PROTEIN SEQUENCE OF 31-41; 45-340; 344-565 AND 569-607</scope>
    <source>
        <strain>Ragusana</strain>
        <tissue>Milk</tissue>
    </source>
</reference>
<feature type="signal peptide" evidence="3">
    <location>
        <begin position="1"/>
        <end position="18"/>
    </location>
</feature>
<feature type="propeptide" id="PRO_0000001061" evidence="3">
    <location>
        <begin position="19"/>
        <end position="24"/>
    </location>
</feature>
<feature type="chain" id="PRO_0000001062" description="Albumin">
    <location>
        <begin position="25"/>
        <end position="607"/>
    </location>
</feature>
<feature type="domain" description="Albumin 1" evidence="5">
    <location>
        <begin position="19"/>
        <end position="209"/>
    </location>
</feature>
<feature type="domain" description="Albumin 2" evidence="5">
    <location>
        <begin position="210"/>
        <end position="402"/>
    </location>
</feature>
<feature type="domain" description="Albumin 3" evidence="5">
    <location>
        <begin position="403"/>
        <end position="600"/>
    </location>
</feature>
<feature type="binding site" evidence="3">
    <location>
        <position position="27"/>
    </location>
    <ligand>
        <name>Cu cation</name>
        <dbReference type="ChEBI" id="CHEBI:23378"/>
    </ligand>
</feature>
<feature type="binding site" evidence="2">
    <location>
        <position position="30"/>
    </location>
    <ligand>
        <name>Ca(2+)</name>
        <dbReference type="ChEBI" id="CHEBI:29108"/>
        <label>1</label>
    </ligand>
</feature>
<feature type="binding site" evidence="2">
    <location>
        <position position="37"/>
    </location>
    <ligand>
        <name>Ca(2+)</name>
        <dbReference type="ChEBI" id="CHEBI:29108"/>
        <label>2</label>
    </ligand>
</feature>
<feature type="binding site" evidence="1">
    <location>
        <position position="91"/>
    </location>
    <ligand>
        <name>Zn(2+)</name>
        <dbReference type="ChEBI" id="CHEBI:29105"/>
    </ligand>
</feature>
<feature type="binding site" evidence="2">
    <location>
        <position position="267"/>
    </location>
    <ligand>
        <name>Ca(2+)</name>
        <dbReference type="ChEBI" id="CHEBI:29108"/>
        <label>1</label>
    </ligand>
</feature>
<feature type="binding site" evidence="1">
    <location>
        <position position="270"/>
    </location>
    <ligand>
        <name>Zn(2+)</name>
        <dbReference type="ChEBI" id="CHEBI:29105"/>
    </ligand>
</feature>
<feature type="binding site" evidence="2">
    <location>
        <position position="272"/>
    </location>
    <ligand>
        <name>Ca(2+)</name>
        <dbReference type="ChEBI" id="CHEBI:29108"/>
        <label>1</label>
    </ligand>
</feature>
<feature type="binding site" evidence="1">
    <location>
        <position position="272"/>
    </location>
    <ligand>
        <name>Zn(2+)</name>
        <dbReference type="ChEBI" id="CHEBI:29105"/>
    </ligand>
</feature>
<feature type="binding site" evidence="2">
    <location>
        <position position="275"/>
    </location>
    <ligand>
        <name>Ca(2+)</name>
        <dbReference type="ChEBI" id="CHEBI:29108"/>
        <label>1</label>
    </ligand>
</feature>
<feature type="binding site" evidence="2">
    <location>
        <position position="278"/>
    </location>
    <ligand>
        <name>Ca(2+)</name>
        <dbReference type="ChEBI" id="CHEBI:29108"/>
        <label>2</label>
    </ligand>
</feature>
<feature type="binding site" evidence="2">
    <location>
        <position position="282"/>
    </location>
    <ligand>
        <name>Ca(2+)</name>
        <dbReference type="ChEBI" id="CHEBI:29108"/>
        <label>2</label>
    </ligand>
</feature>
<feature type="modified residue" description="Phosphoserine" evidence="1">
    <location>
        <position position="29"/>
    </location>
</feature>
<feature type="modified residue" description="Phosphoserine" evidence="1">
    <location>
        <position position="82"/>
    </location>
</feature>
<feature type="modified residue" description="Phosphoserine" evidence="1">
    <location>
        <position position="89"/>
    </location>
</feature>
<feature type="modified residue" description="Phosphothreonine" evidence="1">
    <location>
        <position position="107"/>
    </location>
</feature>
<feature type="modified residue" description="N6-succinyllysine" evidence="4">
    <location>
        <position position="228"/>
    </location>
</feature>
<feature type="modified residue" description="Phosphoserine" evidence="1">
    <location>
        <position position="442"/>
    </location>
</feature>
<feature type="modified residue" description="Phosphothreonine" evidence="1">
    <location>
        <position position="443"/>
    </location>
</feature>
<feature type="modified residue" description="Phosphothreonine" evidence="1">
    <location>
        <position position="445"/>
    </location>
</feature>
<feature type="modified residue" description="Phosphoserine" evidence="1">
    <location>
        <position position="512"/>
    </location>
</feature>
<feature type="modified residue" description="N6-methyllysine" evidence="1">
    <location>
        <position position="557"/>
    </location>
</feature>
<feature type="modified residue" description="Phosphothreonine" evidence="3">
    <location>
        <position position="569"/>
    </location>
</feature>
<feature type="modified residue" description="N6-succinyllysine" evidence="4">
    <location>
        <position position="587"/>
    </location>
</feature>
<feature type="disulfide bond" evidence="5">
    <location>
        <begin position="77"/>
        <end position="86"/>
    </location>
</feature>
<feature type="disulfide bond" evidence="5">
    <location>
        <begin position="99"/>
        <end position="115"/>
    </location>
</feature>
<feature type="disulfide bond" evidence="5">
    <location>
        <begin position="114"/>
        <end position="125"/>
    </location>
</feature>
<feature type="disulfide bond" evidence="5">
    <location>
        <begin position="147"/>
        <end position="192"/>
    </location>
</feature>
<feature type="disulfide bond" evidence="5">
    <location>
        <begin position="191"/>
        <end position="200"/>
    </location>
</feature>
<feature type="disulfide bond" evidence="5">
    <location>
        <begin position="223"/>
        <end position="269"/>
    </location>
</feature>
<feature type="disulfide bond" evidence="5">
    <location>
        <begin position="268"/>
        <end position="276"/>
    </location>
</feature>
<feature type="disulfide bond" evidence="5">
    <location>
        <begin position="288"/>
        <end position="302"/>
    </location>
</feature>
<feature type="disulfide bond" evidence="5">
    <location>
        <begin position="301"/>
        <end position="312"/>
    </location>
</feature>
<feature type="disulfide bond" evidence="5">
    <location>
        <begin position="339"/>
        <end position="384"/>
    </location>
</feature>
<feature type="disulfide bond" evidence="5">
    <location>
        <begin position="383"/>
        <end position="392"/>
    </location>
</feature>
<feature type="disulfide bond" evidence="5">
    <location>
        <begin position="415"/>
        <end position="461"/>
    </location>
</feature>
<feature type="disulfide bond" evidence="5">
    <location>
        <begin position="460"/>
        <end position="471"/>
    </location>
</feature>
<feature type="disulfide bond" evidence="5">
    <location>
        <begin position="484"/>
        <end position="500"/>
    </location>
</feature>
<feature type="disulfide bond" evidence="5">
    <location>
        <begin position="499"/>
        <end position="510"/>
    </location>
</feature>
<feature type="disulfide bond" evidence="5">
    <location>
        <begin position="537"/>
        <end position="582"/>
    </location>
</feature>
<feature type="disulfide bond" evidence="5">
    <location>
        <begin position="581"/>
        <end position="590"/>
    </location>
</feature>
<feature type="sequence conflict" description="In Ref. 2; AA sequence." evidence="6" ref="2">
    <original>I</original>
    <variation>V</variation>
    <location>
        <position position="521"/>
    </location>
</feature>
<organism>
    <name type="scientific">Equus asinus</name>
    <name type="common">Donkey</name>
    <name type="synonym">Equus africanus asinus</name>
    <dbReference type="NCBI Taxonomy" id="9793"/>
    <lineage>
        <taxon>Eukaryota</taxon>
        <taxon>Metazoa</taxon>
        <taxon>Chordata</taxon>
        <taxon>Craniata</taxon>
        <taxon>Vertebrata</taxon>
        <taxon>Euteleostomi</taxon>
        <taxon>Mammalia</taxon>
        <taxon>Eutheria</taxon>
        <taxon>Laurasiatheria</taxon>
        <taxon>Perissodactyla</taxon>
        <taxon>Equidae</taxon>
        <taxon>Equus</taxon>
    </lineage>
</organism>
<gene>
    <name type="primary">ALB</name>
</gene>
<comment type="function">
    <text evidence="1 2">Binds water, Ca(2+), Na(+), K(+), fatty acids, hormones, bilirubin and drugs. Its main function is the regulation of the colloidal osmotic pressure of blood. Major zinc transporter in plasma, typically binds about 80% of all plasma zinc (By similarity). Major calcium and magnesium transporter in plasma, binds approximately 45% of circulating calcium and magnesium in plasma (By similarity). Potentially has more than two calcium-binding sites and might additionally bind calcium in a non-specific manner (By similarity). The shared binding site between zinc and calcium at residue Asp-272 suggests a crosstalk between zinc and calcium transport in the blood (By similarity). The rank order of affinity is zinc &gt; calcium &gt; magnesium (By similarity). Binds to the bacterial siderophore enterobactin and inhibits enterobactin-mediated iron uptake of E.coli from ferric transferrin, and may thereby limit the utilization of iron and growth of enteric bacteria such as E.coli (By similarity). Does not prevent iron uptake by the bacterial siderophore aerobactin (By similarity).</text>
</comment>
<comment type="subunit">
    <text evidence="1 4">Interacts with FCGRT; this interaction regulates ALB homeostasis (By similarity). Interacts with TASOR (By similarity). In plasma, occurs in a covalently-linked complex with chromophore-bound alpha-1-microglobulin; this interaction does not prevent fatty acid binding to ALB.</text>
</comment>
<comment type="subcellular location">
    <subcellularLocation>
        <location>Secreted</location>
    </subcellularLocation>
</comment>
<comment type="tissue specificity">
    <text>Plasma.</text>
</comment>
<comment type="PTM">
    <text evidence="1">Phosphorylated by FAM20C in the extracellular medium.</text>
</comment>
<comment type="similarity">
    <text evidence="5">Belongs to the ALB/AFP/VDB family.</text>
</comment>